<accession>Q86BJ3</accession>
<accession>B9EQT7</accession>
<accession>E1JI38</accession>
<accession>E4NKL9</accession>
<accession>E8NH03</accession>
<accession>F2FB47</accession>
<accession>O96662</accession>
<accession>Q7KNQ1</accession>
<accession>Q86BJ2</accession>
<accession>Q86BJ4</accession>
<accession>Q86BJ5</accession>
<accession>Q86BJ6</accession>
<accession>Q86BJ7</accession>
<accession>Q86BJ8</accession>
<accession>Q86BJ9</accession>
<accession>Q86BK0</accession>
<accession>Q8IQU0</accession>
<accession>Q968U2</accession>
<accession>Q9VVY5</accession>
<evidence type="ECO:0000250" key="1">
    <source>
        <dbReference type="UniProtKB" id="Q9Y2C2"/>
    </source>
</evidence>
<evidence type="ECO:0000255" key="2"/>
<evidence type="ECO:0000255" key="3">
    <source>
        <dbReference type="PROSITE-ProRule" id="PRU00498"/>
    </source>
</evidence>
<evidence type="ECO:0000256" key="4">
    <source>
        <dbReference type="SAM" id="MobiDB-lite"/>
    </source>
</evidence>
<evidence type="ECO:0000269" key="5">
    <source>
    </source>
</evidence>
<evidence type="ECO:0000269" key="6">
    <source>
    </source>
</evidence>
<evidence type="ECO:0000269" key="7">
    <source>
    </source>
</evidence>
<evidence type="ECO:0000269" key="8">
    <source>
    </source>
</evidence>
<evidence type="ECO:0000269" key="9">
    <source>
    </source>
</evidence>
<evidence type="ECO:0000269" key="10">
    <source>
    </source>
</evidence>
<evidence type="ECO:0000269" key="11">
    <source>
    </source>
</evidence>
<evidence type="ECO:0000269" key="12">
    <source>
    </source>
</evidence>
<evidence type="ECO:0000269" key="13">
    <source>
    </source>
</evidence>
<evidence type="ECO:0000269" key="14">
    <source>
    </source>
</evidence>
<evidence type="ECO:0000269" key="15">
    <source>
    </source>
</evidence>
<evidence type="ECO:0000303" key="16">
    <source>
    </source>
</evidence>
<evidence type="ECO:0000303" key="17">
    <source>
    </source>
</evidence>
<evidence type="ECO:0000303" key="18">
    <source>
    </source>
</evidence>
<evidence type="ECO:0000303" key="19">
    <source ref="5"/>
</evidence>
<evidence type="ECO:0000305" key="20"/>
<evidence type="ECO:0000305" key="21">
    <source>
    </source>
</evidence>
<evidence type="ECO:0000305" key="22">
    <source>
    </source>
</evidence>
<evidence type="ECO:0000305" key="23">
    <source>
    </source>
</evidence>
<evidence type="ECO:0000312" key="24">
    <source>
        <dbReference type="FlyBase" id="FBgn0003089"/>
    </source>
</evidence>
<evidence type="ECO:0000312" key="25">
    <source>
        <dbReference type="Proteomes" id="UP000000803"/>
    </source>
</evidence>
<keyword id="KW-0025">Alternative splicing</keyword>
<keyword id="KW-0217">Developmental protein</keyword>
<keyword id="KW-0325">Glycoprotein</keyword>
<keyword id="KW-0333">Golgi apparatus</keyword>
<keyword id="KW-0472">Membrane</keyword>
<keyword id="KW-1185">Reference proteome</keyword>
<keyword id="KW-0735">Signal-anchor</keyword>
<keyword id="KW-0808">Transferase</keyword>
<keyword id="KW-0812">Transmembrane</keyword>
<keyword id="KW-1133">Transmembrane helix</keyword>
<proteinExistence type="evidence at protein level"/>
<organism evidence="25">
    <name type="scientific">Drosophila melanogaster</name>
    <name type="common">Fruit fly</name>
    <dbReference type="NCBI Taxonomy" id="7227"/>
    <lineage>
        <taxon>Eukaryota</taxon>
        <taxon>Metazoa</taxon>
        <taxon>Ecdysozoa</taxon>
        <taxon>Arthropoda</taxon>
        <taxon>Hexapoda</taxon>
        <taxon>Insecta</taxon>
        <taxon>Pterygota</taxon>
        <taxon>Neoptera</taxon>
        <taxon>Endopterygota</taxon>
        <taxon>Diptera</taxon>
        <taxon>Brachycera</taxon>
        <taxon>Muscomorpha</taxon>
        <taxon>Ephydroidea</taxon>
        <taxon>Drosophilidae</taxon>
        <taxon>Drosophila</taxon>
        <taxon>Sophophora</taxon>
    </lineage>
</organism>
<sequence length="514" mass="60260">MSLNAERSYKMKLRDVENAFKYRRIPYPKRSVELIALLAISCTFFLFMHTNKLNSRLKEMEVKLQPSEFSALGLTGNHISGHDAGKHDDINTLHGTYQYLKSTGQKVGYNVHDRRSSEEQLRTPTAHGHHHDHHSHHHHMHQQEKIDGHKHKASHDKQLAVPDNKHKEDEVHYEDDEDEVEENDDDLANDVGTTDSEGFNFKADLLNNTKYAEVDFVFFNRVPKVGSQSLMELMARLGKINGFTHARNKGSAHETIVMNKQRQNDLIADLLTRPKPHIYSQHIAYINFTRFHLPKPIYINLIRDPIDRIISWHYYIRAPWYYRDMQAKLGENAIPMPSEEFMNLDLDTCVRNHDPHCTFTQMQIKNPVGDHRRQTLFFCGMNQKLCMPFNSEAAMQKAKRTVETEYAVVGTWEDTNITLSVLEAYIPRYFRNAKVAYYLGKDRLSRVNRNNVTRIVSDETRLILRKNLTNEIEFYEFCKQRLYLQYAALSHGKRFGEDDYLLVPEQQNEYNEDY</sequence>
<comment type="function">
    <text evidence="10 13 14 15 21 22 23">Sulfotransferase involved in dorsoventral axis patterning in early embryos (PubMed:9568717, PubMed:9827800). Required for the ventral activation of ea/easter by the protease snk in the perivitelline space between the embryonic membrane and the eggshell; activation of ea requires both activation of the ndl-gd-snk protease cascade and sulfation of a vitelline membrane component by pip (PubMed:16566925, PubMed:20605458, PubMed:9827800). Probably acts by mediating the sulfation of some glycoprotein or glycosaminoglycan stably deposited in the vitelline membrane, whose ventrally localized modification leads to spatially restricted activation of the protease cascade resulting in localized activation of the spz Toll receptor ligand by ea (Probable).</text>
</comment>
<comment type="function">
    <molecule>Isoform A</molecule>
    <text evidence="6 11 12">Probably required redundantly with isoform H for dorsoventral axis patterning in embryos (PubMed:11169845). Lacks 2-O-sulfotransferase activity towards completely desulfated N-sulfated (CDSNS) heparin, chondroitin, and chondroitin sulfate A, B (dermatan sulfate), and C (PubMed:17227754). Sulfates several components of the eggshell vitelline membrane, including Vml, Vm26Aa, Vm32E and psd/palisade/Fcp26Aa (PubMed:19540119).</text>
</comment>
<comment type="function">
    <molecule>Isoform H</molecule>
    <text evidence="6">Probably required redundantly with isoform A for dorsoventral axis patterning in embryos.</text>
</comment>
<comment type="function">
    <molecule>Isoform F</molecule>
    <text evidence="11">Lacks 2-O-sulfotransferase activity towards CDSNS heparin, chondroitin, and chondroitin sulfate A, B (dermatan sulfate), and C.</text>
</comment>
<comment type="subunit">
    <text evidence="9">Interacts with wbl/windbeutel; the interaction is direct and does not require pip to be folded.</text>
</comment>
<comment type="subcellular location">
    <subcellularLocation>
        <location evidence="5 8">Golgi apparatus membrane</location>
        <topology evidence="5">Single-pass type II membrane protein</topology>
    </subcellularLocation>
    <text evidence="5 8">Wbl/windbeutel is required for targeting to the Golgi.</text>
</comment>
<comment type="alternative products">
    <event type="alternative splicing"/>
    <isoform>
        <id>Q86BJ3-1</id>
        <name evidence="24">L</name>
        <name evidence="20">1</name>
        <name evidence="16">Box 2</name>
        <name>st2</name>
        <sequence type="displayed"/>
    </isoform>
    <isoform>
        <id>Q86BJ3-2</id>
        <name evidence="24">C</name>
        <name evidence="20">2</name>
        <name evidence="16">Box 3</name>
        <name>st3</name>
        <sequence type="described" ref="VSP_014075 VSP_014076"/>
    </isoform>
    <isoform>
        <id>Q86BJ3-3</id>
        <name evidence="24">G</name>
        <name evidence="20">3</name>
        <name evidence="16">Box 6</name>
        <name>st6</name>
        <sequence type="described" ref="VSP_014069 VSP_014070"/>
    </isoform>
    <isoform>
        <id>Q86BJ3-4</id>
        <name evidence="24">A</name>
        <name evidence="20">4</name>
        <name evidence="16">Box 10</name>
        <name evidence="18">Pipe-ST2</name>
        <name>st10</name>
        <name evidence="17">pipPA</name>
        <sequence type="described" ref="VSP_014067 VSP_014068"/>
    </isoform>
    <isoform>
        <id>Q86BJ3-5</id>
        <name evidence="24">H</name>
        <name evidence="20">5</name>
        <name evidence="16">Box 7</name>
        <name>st7</name>
        <sequence type="described" ref="VSP_014073 VSP_014074"/>
    </isoform>
    <isoform>
        <id>Q86BJ3-7</id>
        <name evidence="24">K</name>
        <name evidence="20">7</name>
        <name evidence="16">Box 1</name>
        <name>st1</name>
        <sequence type="described" ref="VSP_014071 VSP_014072"/>
    </isoform>
    <isoform>
        <id>Q86BJ3-8</id>
        <name evidence="24">J</name>
        <name evidence="20">8</name>
        <name evidence="16">Box 9</name>
        <name evidence="18">Pipe-ST1</name>
        <name>st9</name>
        <sequence type="described" ref="VSP_014077 VSP_014078"/>
    </isoform>
    <isoform>
        <id>Q86BJ3-9</id>
        <name evidence="24">I</name>
        <name evidence="20">9</name>
        <name evidence="16">Box 8</name>
        <name>st8</name>
        <sequence type="described" ref="VSP_014081 VSP_014082"/>
    </isoform>
    <isoform>
        <id>Q86BJ3-10</id>
        <name evidence="24">F</name>
        <name evidence="20">10</name>
        <name evidence="16">Box 4</name>
        <name>st4</name>
        <name evidence="17">pipPF</name>
        <sequence type="described" ref="VSP_014079 VSP_014080"/>
    </isoform>
    <isoform>
        <id>Q86BJ3-11</id>
        <name evidence="24">D</name>
        <name evidence="20">11</name>
        <name evidence="16">Box 5</name>
        <name>st5</name>
        <sequence type="described" ref="VSP_014065 VSP_014066"/>
    </isoform>
    <isoform>
        <id>Q86BJ3-12</id>
        <name evidence="24">N</name>
        <name evidence="20">12</name>
        <sequence type="described" ref="VSP_054035"/>
    </isoform>
    <isoform>
        <id>Q86BJ3-13</id>
        <name evidence="20">M</name>
        <sequence type="described" ref="VSP_054034 VSP_054036"/>
    </isoform>
    <text evidence="6 15">A number of isoforms are produced (PubMed:11169845, PubMed:9827800). The gene encodes at least 10 potential gene segment duplications encoding alternative C-terminal domains (PubMed:11169845).</text>
</comment>
<comment type="tissue specificity">
    <molecule>Isoform A</molecule>
    <text evidence="6 15">Ovary-specific (PubMed:11169845, PubMed:9827800). Specifically expressed in the ventral follicle cells of stage 9-10 egg chambers (PubMed:11169845, PubMed:9827800).</text>
</comment>
<comment type="tissue specificity">
    <molecule>Isoform H</molecule>
    <text evidence="6">Expressed in ovaries (PubMed:11169845). Specifically expressed in the ventral follicle cells of stage 9-10 egg chambers (PubMed:11169845).</text>
</comment>
<comment type="developmental stage">
    <molecule>Isoform A</molecule>
    <text evidence="6 15">Strongly expressed in salivary glands from stage 12 embryos and onwards throughout development (PubMed:11169845, PubMed:9827800). Initially described as being expressed in the somatic component of the embryonic ovary, this was later shown to probably be an experimental artifact detecting expression of the overlapping gene fal/falten (PubMed:11169845, PubMed:9827800).</text>
</comment>
<comment type="developmental stage">
    <molecule>Isoform J</molecule>
    <text evidence="6 15">Strongly expressed in salivary glands from stage 12 embryos and onwards throughout development.</text>
</comment>
<comment type="developmental stage">
    <molecule>Isoform G</molecule>
    <text evidence="6">Strongly expressed in salivary glands of developing embryos.</text>
</comment>
<comment type="developmental stage">
    <molecule>Isoform H</molecule>
    <text evidence="6">Strongly expressed in salivary glands of developing embryos.</text>
</comment>
<comment type="developmental stage">
    <molecule>Isoform I</molecule>
    <text evidence="6">Strongly expressed in salivary glands of developing embryos.</text>
</comment>
<comment type="developmental stage">
    <molecule>Isoform D</molecule>
    <text evidence="6">Strongly expressed in salivary glands of developing embryos.</text>
</comment>
<comment type="induction">
    <text evidence="7 15">Down-regulated by gurken (grk) and EGF receptor signaling, preventing its expression in dorsal follicle cells.</text>
</comment>
<comment type="disruption phenotype">
    <text evidence="6">RNAi-mediated knockdown in females targeting all isoforms, or a combination of isoforms A, H, J and I only, results in dorsalized offspring.</text>
</comment>
<comment type="similarity">
    <text evidence="20">Belongs to the sulfotransferase 3 family.</text>
</comment>
<comment type="sequence caution" evidence="20">
    <conflict type="erroneous initiation">
        <sequence resource="EMBL-CDS" id="AAD04925"/>
    </conflict>
    <text>Truncated N-terminus.</text>
</comment>
<comment type="sequence caution" evidence="20">
    <conflict type="erroneous initiation">
        <sequence resource="EMBL-CDS" id="ACM16727"/>
    </conflict>
    <text>Truncated N-terminus.</text>
</comment>
<comment type="sequence caution" evidence="20">
    <conflict type="erroneous translation">
        <sequence resource="EMBL-CDS" id="ADZ49072"/>
    </conflict>
    <text>Wrong choice of frame.</text>
</comment>
<comment type="sequence caution" evidence="20">
    <conflict type="miscellaneous discrepancy">
        <sequence resource="EMBL-CDS" id="ADZ49072"/>
    </conflict>
    <text>Intron retention.</text>
</comment>
<comment type="sequence caution" evidence="20">
    <conflict type="erroneous translation">
        <sequence resource="EMBL-CDS" id="AED98571"/>
    </conflict>
    <text>Wrong choice of frame.</text>
</comment>
<dbReference type="EC" id="2.8.2.-" evidence="1"/>
<dbReference type="EMBL" id="AF102135">
    <property type="status" value="NOT_ANNOTATED_CDS"/>
    <property type="molecule type" value="Genomic_DNA"/>
</dbReference>
<dbReference type="EMBL" id="AF102136">
    <property type="protein sequence ID" value="AAD04925.1"/>
    <property type="status" value="ALT_INIT"/>
    <property type="molecule type" value="mRNA"/>
</dbReference>
<dbReference type="EMBL" id="AF263993">
    <property type="protein sequence ID" value="AAK56855.1"/>
    <property type="molecule type" value="mRNA"/>
</dbReference>
<dbReference type="EMBL" id="AE014296">
    <property type="protein sequence ID" value="AAF49170.2"/>
    <property type="molecule type" value="Genomic_DNA"/>
</dbReference>
<dbReference type="EMBL" id="AE014296">
    <property type="protein sequence ID" value="AAN11662.1"/>
    <property type="molecule type" value="Genomic_DNA"/>
</dbReference>
<dbReference type="EMBL" id="AE014296">
    <property type="protein sequence ID" value="AAO41225.1"/>
    <property type="molecule type" value="Genomic_DNA"/>
</dbReference>
<dbReference type="EMBL" id="AE014296">
    <property type="protein sequence ID" value="AAO41226.1"/>
    <property type="molecule type" value="Genomic_DNA"/>
</dbReference>
<dbReference type="EMBL" id="AE014296">
    <property type="protein sequence ID" value="AAO41227.1"/>
    <property type="molecule type" value="Genomic_DNA"/>
</dbReference>
<dbReference type="EMBL" id="AE014296">
    <property type="protein sequence ID" value="AAO41228.1"/>
    <property type="molecule type" value="Genomic_DNA"/>
</dbReference>
<dbReference type="EMBL" id="AE014296">
    <property type="protein sequence ID" value="AAO41229.1"/>
    <property type="molecule type" value="Genomic_DNA"/>
</dbReference>
<dbReference type="EMBL" id="AE014296">
    <property type="protein sequence ID" value="AAO41230.1"/>
    <property type="molecule type" value="Genomic_DNA"/>
</dbReference>
<dbReference type="EMBL" id="AE014296">
    <property type="protein sequence ID" value="AAO41231.2"/>
    <property type="molecule type" value="Genomic_DNA"/>
</dbReference>
<dbReference type="EMBL" id="AE014296">
    <property type="protein sequence ID" value="AAO41232.1"/>
    <property type="molecule type" value="Genomic_DNA"/>
</dbReference>
<dbReference type="EMBL" id="AE014296">
    <property type="protein sequence ID" value="AAO41233.1"/>
    <property type="molecule type" value="Genomic_DNA"/>
</dbReference>
<dbReference type="EMBL" id="AE014296">
    <property type="protein sequence ID" value="ACZ94738.1"/>
    <property type="molecule type" value="Genomic_DNA"/>
</dbReference>
<dbReference type="EMBL" id="BT010278">
    <property type="protein sequence ID" value="AAQ23596.1"/>
    <property type="molecule type" value="mRNA"/>
</dbReference>
<dbReference type="EMBL" id="BT058012">
    <property type="protein sequence ID" value="ACM16727.1"/>
    <property type="status" value="ALT_INIT"/>
    <property type="molecule type" value="mRNA"/>
</dbReference>
<dbReference type="EMBL" id="BT125816">
    <property type="protein sequence ID" value="ADR71725.1"/>
    <property type="molecule type" value="mRNA"/>
</dbReference>
<dbReference type="EMBL" id="BT125857">
    <property type="protein sequence ID" value="ADU79245.1"/>
    <property type="molecule type" value="mRNA"/>
</dbReference>
<dbReference type="EMBL" id="BT126134">
    <property type="protein sequence ID" value="ADZ49072.1"/>
    <property type="status" value="ALT_SEQ"/>
    <property type="molecule type" value="mRNA"/>
</dbReference>
<dbReference type="EMBL" id="BT126392">
    <property type="protein sequence ID" value="AED98571.1"/>
    <property type="status" value="ALT_SEQ"/>
    <property type="molecule type" value="mRNA"/>
</dbReference>
<dbReference type="RefSeq" id="NP_001163467.1">
    <property type="nucleotide sequence ID" value="NM_001169996.2"/>
</dbReference>
<dbReference type="RefSeq" id="NP_524158.2">
    <molecule id="Q86BJ3-4"/>
    <property type="nucleotide sequence ID" value="NM_079434.3"/>
</dbReference>
<dbReference type="RefSeq" id="NP_730402.1">
    <molecule id="Q86BJ3-2"/>
    <property type="nucleotide sequence ID" value="NM_168793.2"/>
</dbReference>
<dbReference type="RefSeq" id="NP_788529.1">
    <molecule id="Q86BJ3-8"/>
    <property type="nucleotide sequence ID" value="NM_176351.4"/>
</dbReference>
<dbReference type="RefSeq" id="NP_788530.1">
    <molecule id="Q86BJ3-9"/>
    <property type="nucleotide sequence ID" value="NM_176352.2"/>
</dbReference>
<dbReference type="RefSeq" id="NP_788531.1">
    <molecule id="Q86BJ3-5"/>
    <property type="nucleotide sequence ID" value="NM_176353.2"/>
</dbReference>
<dbReference type="RefSeq" id="NP_788532.1">
    <molecule id="Q86BJ3-3"/>
    <property type="nucleotide sequence ID" value="NM_176354.2"/>
</dbReference>
<dbReference type="RefSeq" id="NP_788533.1">
    <molecule id="Q86BJ3-11"/>
    <property type="nucleotide sequence ID" value="NM_176355.2"/>
</dbReference>
<dbReference type="RefSeq" id="NP_788534.1">
    <molecule id="Q86BJ3-10"/>
    <property type="nucleotide sequence ID" value="NM_176356.2"/>
</dbReference>
<dbReference type="RefSeq" id="NP_788535.2">
    <molecule id="Q86BJ3-12"/>
    <property type="nucleotide sequence ID" value="NM_176357.2"/>
</dbReference>
<dbReference type="RefSeq" id="NP_788536.1">
    <molecule id="Q86BJ3-1"/>
    <property type="nucleotide sequence ID" value="NM_176358.2"/>
</dbReference>
<dbReference type="RefSeq" id="NP_788537.1">
    <molecule id="Q86BJ3-7"/>
    <property type="nucleotide sequence ID" value="NM_176359.2"/>
</dbReference>
<dbReference type="SMR" id="Q86BJ3"/>
<dbReference type="BioGRID" id="65379">
    <property type="interactions" value="21"/>
</dbReference>
<dbReference type="FunCoup" id="Q86BJ3">
    <property type="interactions" value="3"/>
</dbReference>
<dbReference type="IntAct" id="Q86BJ3">
    <property type="interactions" value="8"/>
</dbReference>
<dbReference type="STRING" id="7227.FBpp0074780"/>
<dbReference type="GlyCosmos" id="Q86BJ3">
    <property type="glycosylation" value="5 sites, No reported glycans"/>
</dbReference>
<dbReference type="GlyGen" id="Q86BJ3">
    <property type="glycosylation" value="5 sites"/>
</dbReference>
<dbReference type="PaxDb" id="7227-FBpp0074780"/>
<dbReference type="DNASU" id="40104"/>
<dbReference type="EnsemblMetazoa" id="FBtr0075003">
    <molecule id="Q86BJ3-4"/>
    <property type="protein sequence ID" value="FBpp0074770"/>
    <property type="gene ID" value="FBgn0003089"/>
</dbReference>
<dbReference type="EnsemblMetazoa" id="FBtr0075004">
    <molecule id="Q86BJ3-2"/>
    <property type="protein sequence ID" value="FBpp0074771"/>
    <property type="gene ID" value="FBgn0003089"/>
</dbReference>
<dbReference type="EnsemblMetazoa" id="FBtr0075005">
    <molecule id="Q86BJ3-11"/>
    <property type="protein sequence ID" value="FBpp0074772"/>
    <property type="gene ID" value="FBgn0003089"/>
</dbReference>
<dbReference type="EnsemblMetazoa" id="FBtr0075007">
    <molecule id="Q86BJ3-10"/>
    <property type="protein sequence ID" value="FBpp0074774"/>
    <property type="gene ID" value="FBgn0003089"/>
</dbReference>
<dbReference type="EnsemblMetazoa" id="FBtr0075008">
    <molecule id="Q86BJ3-3"/>
    <property type="protein sequence ID" value="FBpp0074775"/>
    <property type="gene ID" value="FBgn0003089"/>
</dbReference>
<dbReference type="EnsemblMetazoa" id="FBtr0075009">
    <molecule id="Q86BJ3-5"/>
    <property type="protein sequence ID" value="FBpp0074776"/>
    <property type="gene ID" value="FBgn0003089"/>
</dbReference>
<dbReference type="EnsemblMetazoa" id="FBtr0075010">
    <molecule id="Q86BJ3-9"/>
    <property type="protein sequence ID" value="FBpp0074777"/>
    <property type="gene ID" value="FBgn0003089"/>
</dbReference>
<dbReference type="EnsemblMetazoa" id="FBtr0075011">
    <molecule id="Q86BJ3-8"/>
    <property type="protein sequence ID" value="FBpp0074778"/>
    <property type="gene ID" value="FBgn0003089"/>
</dbReference>
<dbReference type="EnsemblMetazoa" id="FBtr0075012">
    <molecule id="Q86BJ3-7"/>
    <property type="protein sequence ID" value="FBpp0074779"/>
    <property type="gene ID" value="FBgn0003089"/>
</dbReference>
<dbReference type="EnsemblMetazoa" id="FBtr0075013">
    <molecule id="Q86BJ3-1"/>
    <property type="protein sequence ID" value="FBpp0074780"/>
    <property type="gene ID" value="FBgn0003089"/>
</dbReference>
<dbReference type="EnsemblMetazoa" id="FBtr0333897">
    <molecule id="Q86BJ3-12"/>
    <property type="protein sequence ID" value="FBpp0306029"/>
    <property type="gene ID" value="FBgn0003089"/>
</dbReference>
<dbReference type="GeneID" id="40104"/>
<dbReference type="KEGG" id="dme:Dmel_CG9614"/>
<dbReference type="UCSC" id="CG9614-RA">
    <molecule id="Q86BJ3-1"/>
    <property type="organism name" value="d. melanogaster"/>
</dbReference>
<dbReference type="AGR" id="FB:FBgn0003089"/>
<dbReference type="CTD" id="5304"/>
<dbReference type="FlyBase" id="FBgn0003089">
    <property type="gene designation" value="pip"/>
</dbReference>
<dbReference type="VEuPathDB" id="VectorBase:FBgn0003089"/>
<dbReference type="eggNOG" id="KOG3922">
    <property type="taxonomic scope" value="Eukaryota"/>
</dbReference>
<dbReference type="GeneTree" id="ENSGT00530000063408"/>
<dbReference type="InParanoid" id="Q86BJ3"/>
<dbReference type="OMA" id="PMPIYVN"/>
<dbReference type="OrthoDB" id="10019582at2759"/>
<dbReference type="PhylomeDB" id="Q86BJ3"/>
<dbReference type="Reactome" id="R-DME-2022923">
    <property type="pathway name" value="Dermatan sulfate biosynthesis"/>
</dbReference>
<dbReference type="SignaLink" id="Q86BJ3"/>
<dbReference type="BioGRID-ORCS" id="40104">
    <property type="hits" value="0 hits in 1 CRISPR screen"/>
</dbReference>
<dbReference type="ChiTaRS" id="psq">
    <property type="organism name" value="fly"/>
</dbReference>
<dbReference type="GenomeRNAi" id="40104"/>
<dbReference type="PRO" id="PR:Q86BJ3"/>
<dbReference type="Proteomes" id="UP000000803">
    <property type="component" value="Chromosome 3L"/>
</dbReference>
<dbReference type="Bgee" id="FBgn0003089">
    <property type="expression patterns" value="Expressed in posterior terminal follicle cell in ovary and 24 other cell types or tissues"/>
</dbReference>
<dbReference type="GO" id="GO:0005694">
    <property type="term" value="C:chromosome"/>
    <property type="evidence" value="ECO:0000314"/>
    <property type="project" value="FlyBase"/>
</dbReference>
<dbReference type="GO" id="GO:0005794">
    <property type="term" value="C:Golgi apparatus"/>
    <property type="evidence" value="ECO:0000314"/>
    <property type="project" value="FlyBase"/>
</dbReference>
<dbReference type="GO" id="GO:0000139">
    <property type="term" value="C:Golgi membrane"/>
    <property type="evidence" value="ECO:0000303"/>
    <property type="project" value="UniProtKB"/>
</dbReference>
<dbReference type="GO" id="GO:0005634">
    <property type="term" value="C:nucleus"/>
    <property type="evidence" value="ECO:0000314"/>
    <property type="project" value="FlyBase"/>
</dbReference>
<dbReference type="GO" id="GO:0061133">
    <property type="term" value="F:endopeptidase activator activity"/>
    <property type="evidence" value="ECO:0000315"/>
    <property type="project" value="FlyBase"/>
</dbReference>
<dbReference type="GO" id="GO:0008146">
    <property type="term" value="F:sulfotransferase activity"/>
    <property type="evidence" value="ECO:0000314"/>
    <property type="project" value="UniProtKB"/>
</dbReference>
<dbReference type="GO" id="GO:0009950">
    <property type="term" value="P:dorsal/ventral axis specification"/>
    <property type="evidence" value="ECO:0000315"/>
    <property type="project" value="FlyBase"/>
</dbReference>
<dbReference type="GO" id="GO:0009880">
    <property type="term" value="P:embryonic pattern specification"/>
    <property type="evidence" value="ECO:0000315"/>
    <property type="project" value="FlyBase"/>
</dbReference>
<dbReference type="GO" id="GO:0040014">
    <property type="term" value="P:regulation of multicellular organism growth"/>
    <property type="evidence" value="ECO:0000315"/>
    <property type="project" value="FlyBase"/>
</dbReference>
<dbReference type="GO" id="GO:0160032">
    <property type="term" value="P:Toll receptor ligand protein activation cascade"/>
    <property type="evidence" value="ECO:0000315"/>
    <property type="project" value="FlyBase"/>
</dbReference>
<dbReference type="FunFam" id="3.40.50.300:FF:001863">
    <property type="entry name" value="Heparan sulfate 2-o-sulfotransferase"/>
    <property type="match status" value="1"/>
</dbReference>
<dbReference type="Gene3D" id="3.40.50.300">
    <property type="entry name" value="P-loop containing nucleotide triphosphate hydrolases"/>
    <property type="match status" value="1"/>
</dbReference>
<dbReference type="InterPro" id="IPR007734">
    <property type="entry name" value="Heparan_SO4_2-O-STrfase"/>
</dbReference>
<dbReference type="InterPro" id="IPR027417">
    <property type="entry name" value="P-loop_NTPase"/>
</dbReference>
<dbReference type="InterPro" id="IPR005331">
    <property type="entry name" value="Sulfotransferase"/>
</dbReference>
<dbReference type="PANTHER" id="PTHR12129">
    <property type="entry name" value="HEPARAN SULFATE 2-O-SULFOTRANSFERASE"/>
    <property type="match status" value="1"/>
</dbReference>
<dbReference type="PANTHER" id="PTHR12129:SF20">
    <property type="entry name" value="HEPARAN SULFATE 2-O-SULFOTRANSFERASE PIPE"/>
    <property type="match status" value="1"/>
</dbReference>
<dbReference type="Pfam" id="PF03567">
    <property type="entry name" value="Sulfotransfer_2"/>
    <property type="match status" value="1"/>
</dbReference>
<dbReference type="SUPFAM" id="SSF52540">
    <property type="entry name" value="P-loop containing nucleoside triphosphate hydrolases"/>
    <property type="match status" value="1"/>
</dbReference>
<protein>
    <recommendedName>
        <fullName evidence="1">Uronyl 2-sulfotransferase homolog pip</fullName>
        <shortName evidence="20">UST</shortName>
        <ecNumber evidence="1">2.8.2.-</ecNumber>
    </recommendedName>
    <alternativeName>
        <fullName evidence="18">Heparan sulfate 2-O-sulfotransferase pipe</fullName>
    </alternativeName>
    <alternativeName>
        <fullName evidence="24">Protein pipe</fullName>
    </alternativeName>
</protein>
<reference key="1">
    <citation type="journal article" date="1998" name="Cell">
        <title>Spatially restricted expression of pipe in the Drosophila egg chamber defines embryonic dorsal-ventral polarity.</title>
        <authorList>
            <person name="Sen J."/>
            <person name="Goltz J.S."/>
            <person name="Stevens L."/>
            <person name="Stein D."/>
        </authorList>
    </citation>
    <scope>NUCLEOTIDE SEQUENCE [GENOMIC DNA]</scope>
    <scope>NUCLEOTIDE SEQUENCE [MRNA] OF 1-379 (ISOFORM A)</scope>
    <scope>FUNCTION</scope>
    <scope>TISSUE SPECIFICITY</scope>
    <scope>DEVELOPMENTAL STAGE</scope>
    <scope>INDUCTION</scope>
</reference>
<reference key="2">
    <citation type="journal article" date="2001" name="Dev. Dyn.">
        <title>The Drosophila dorsoventral determinant PIPE contains ten copies of a variable domain homologous to mammalian heparan sulfate 2-sulfotransferase.</title>
        <authorList>
            <person name="Sergeev P."/>
            <person name="Streit A."/>
            <person name="Heller A."/>
            <person name="Steinmann-Zwicky M."/>
        </authorList>
    </citation>
    <scope>NUCLEOTIDE SEQUENCE [MRNA] (ISOFORM C)</scope>
    <scope>FUNCTION</scope>
    <scope>ALTERNATIVE SPLICING (ISOFORMS L; C; G; A; H; K; J; I; F AND D)</scope>
    <scope>TISSUE SPECIFICITY</scope>
    <scope>DEVELOPMENTAL STAGE</scope>
    <scope>DISRUPTION PHENOTYPE</scope>
</reference>
<reference key="3">
    <citation type="journal article" date="2000" name="Science">
        <title>The genome sequence of Drosophila melanogaster.</title>
        <authorList>
            <person name="Adams M.D."/>
            <person name="Celniker S.E."/>
            <person name="Holt R.A."/>
            <person name="Evans C.A."/>
            <person name="Gocayne J.D."/>
            <person name="Amanatides P.G."/>
            <person name="Scherer S.E."/>
            <person name="Li P.W."/>
            <person name="Hoskins R.A."/>
            <person name="Galle R.F."/>
            <person name="George R.A."/>
            <person name="Lewis S.E."/>
            <person name="Richards S."/>
            <person name="Ashburner M."/>
            <person name="Henderson S.N."/>
            <person name="Sutton G.G."/>
            <person name="Wortman J.R."/>
            <person name="Yandell M.D."/>
            <person name="Zhang Q."/>
            <person name="Chen L.X."/>
            <person name="Brandon R.C."/>
            <person name="Rogers Y.-H.C."/>
            <person name="Blazej R.G."/>
            <person name="Champe M."/>
            <person name="Pfeiffer B.D."/>
            <person name="Wan K.H."/>
            <person name="Doyle C."/>
            <person name="Baxter E.G."/>
            <person name="Helt G."/>
            <person name="Nelson C.R."/>
            <person name="Miklos G.L.G."/>
            <person name="Abril J.F."/>
            <person name="Agbayani A."/>
            <person name="An H.-J."/>
            <person name="Andrews-Pfannkoch C."/>
            <person name="Baldwin D."/>
            <person name="Ballew R.M."/>
            <person name="Basu A."/>
            <person name="Baxendale J."/>
            <person name="Bayraktaroglu L."/>
            <person name="Beasley E.M."/>
            <person name="Beeson K.Y."/>
            <person name="Benos P.V."/>
            <person name="Berman B.P."/>
            <person name="Bhandari D."/>
            <person name="Bolshakov S."/>
            <person name="Borkova D."/>
            <person name="Botchan M.R."/>
            <person name="Bouck J."/>
            <person name="Brokstein P."/>
            <person name="Brottier P."/>
            <person name="Burtis K.C."/>
            <person name="Busam D.A."/>
            <person name="Butler H."/>
            <person name="Cadieu E."/>
            <person name="Center A."/>
            <person name="Chandra I."/>
            <person name="Cherry J.M."/>
            <person name="Cawley S."/>
            <person name="Dahlke C."/>
            <person name="Davenport L.B."/>
            <person name="Davies P."/>
            <person name="de Pablos B."/>
            <person name="Delcher A."/>
            <person name="Deng Z."/>
            <person name="Mays A.D."/>
            <person name="Dew I."/>
            <person name="Dietz S.M."/>
            <person name="Dodson K."/>
            <person name="Doup L.E."/>
            <person name="Downes M."/>
            <person name="Dugan-Rocha S."/>
            <person name="Dunkov B.C."/>
            <person name="Dunn P."/>
            <person name="Durbin K.J."/>
            <person name="Evangelista C.C."/>
            <person name="Ferraz C."/>
            <person name="Ferriera S."/>
            <person name="Fleischmann W."/>
            <person name="Fosler C."/>
            <person name="Gabrielian A.E."/>
            <person name="Garg N.S."/>
            <person name="Gelbart W.M."/>
            <person name="Glasser K."/>
            <person name="Glodek A."/>
            <person name="Gong F."/>
            <person name="Gorrell J.H."/>
            <person name="Gu Z."/>
            <person name="Guan P."/>
            <person name="Harris M."/>
            <person name="Harris N.L."/>
            <person name="Harvey D.A."/>
            <person name="Heiman T.J."/>
            <person name="Hernandez J.R."/>
            <person name="Houck J."/>
            <person name="Hostin D."/>
            <person name="Houston K.A."/>
            <person name="Howland T.J."/>
            <person name="Wei M.-H."/>
            <person name="Ibegwam C."/>
            <person name="Jalali M."/>
            <person name="Kalush F."/>
            <person name="Karpen G.H."/>
            <person name="Ke Z."/>
            <person name="Kennison J.A."/>
            <person name="Ketchum K.A."/>
            <person name="Kimmel B.E."/>
            <person name="Kodira C.D."/>
            <person name="Kraft C.L."/>
            <person name="Kravitz S."/>
            <person name="Kulp D."/>
            <person name="Lai Z."/>
            <person name="Lasko P."/>
            <person name="Lei Y."/>
            <person name="Levitsky A.A."/>
            <person name="Li J.H."/>
            <person name="Li Z."/>
            <person name="Liang Y."/>
            <person name="Lin X."/>
            <person name="Liu X."/>
            <person name="Mattei B."/>
            <person name="McIntosh T.C."/>
            <person name="McLeod M.P."/>
            <person name="McPherson D."/>
            <person name="Merkulov G."/>
            <person name="Milshina N.V."/>
            <person name="Mobarry C."/>
            <person name="Morris J."/>
            <person name="Moshrefi A."/>
            <person name="Mount S.M."/>
            <person name="Moy M."/>
            <person name="Murphy B."/>
            <person name="Murphy L."/>
            <person name="Muzny D.M."/>
            <person name="Nelson D.L."/>
            <person name="Nelson D.R."/>
            <person name="Nelson K.A."/>
            <person name="Nixon K."/>
            <person name="Nusskern D.R."/>
            <person name="Pacleb J.M."/>
            <person name="Palazzolo M."/>
            <person name="Pittman G.S."/>
            <person name="Pan S."/>
            <person name="Pollard J."/>
            <person name="Puri V."/>
            <person name="Reese M.G."/>
            <person name="Reinert K."/>
            <person name="Remington K."/>
            <person name="Saunders R.D.C."/>
            <person name="Scheeler F."/>
            <person name="Shen H."/>
            <person name="Shue B.C."/>
            <person name="Siden-Kiamos I."/>
            <person name="Simpson M."/>
            <person name="Skupski M.P."/>
            <person name="Smith T.J."/>
            <person name="Spier E."/>
            <person name="Spradling A.C."/>
            <person name="Stapleton M."/>
            <person name="Strong R."/>
            <person name="Sun E."/>
            <person name="Svirskas R."/>
            <person name="Tector C."/>
            <person name="Turner R."/>
            <person name="Venter E."/>
            <person name="Wang A.H."/>
            <person name="Wang X."/>
            <person name="Wang Z.-Y."/>
            <person name="Wassarman D.A."/>
            <person name="Weinstock G.M."/>
            <person name="Weissenbach J."/>
            <person name="Williams S.M."/>
            <person name="Woodage T."/>
            <person name="Worley K.C."/>
            <person name="Wu D."/>
            <person name="Yang S."/>
            <person name="Yao Q.A."/>
            <person name="Ye J."/>
            <person name="Yeh R.-F."/>
            <person name="Zaveri J.S."/>
            <person name="Zhan M."/>
            <person name="Zhang G."/>
            <person name="Zhao Q."/>
            <person name="Zheng L."/>
            <person name="Zheng X.H."/>
            <person name="Zhong F.N."/>
            <person name="Zhong W."/>
            <person name="Zhou X."/>
            <person name="Zhu S.C."/>
            <person name="Zhu X."/>
            <person name="Smith H.O."/>
            <person name="Gibbs R.A."/>
            <person name="Myers E.W."/>
            <person name="Rubin G.M."/>
            <person name="Venter J.C."/>
        </authorList>
    </citation>
    <scope>NUCLEOTIDE SEQUENCE [LARGE SCALE GENOMIC DNA]</scope>
    <source>
        <strain>Berkeley</strain>
    </source>
</reference>
<reference key="4">
    <citation type="journal article" date="2002" name="Genome Biol.">
        <title>Annotation of the Drosophila melanogaster euchromatic genome: a systematic review.</title>
        <authorList>
            <person name="Misra S."/>
            <person name="Crosby M.A."/>
            <person name="Mungall C.J."/>
            <person name="Matthews B.B."/>
            <person name="Campbell K.S."/>
            <person name="Hradecky P."/>
            <person name="Huang Y."/>
            <person name="Kaminker J.S."/>
            <person name="Millburn G.H."/>
            <person name="Prochnik S.E."/>
            <person name="Smith C.D."/>
            <person name="Tupy J.L."/>
            <person name="Whitfield E.J."/>
            <person name="Bayraktaroglu L."/>
            <person name="Berman B.P."/>
            <person name="Bettencourt B.R."/>
            <person name="Celniker S.E."/>
            <person name="de Grey A.D.N.J."/>
            <person name="Drysdale R.A."/>
            <person name="Harris N.L."/>
            <person name="Richter J."/>
            <person name="Russo S."/>
            <person name="Schroeder A.J."/>
            <person name="Shu S.Q."/>
            <person name="Stapleton M."/>
            <person name="Yamada C."/>
            <person name="Ashburner M."/>
            <person name="Gelbart W.M."/>
            <person name="Rubin G.M."/>
            <person name="Lewis S.E."/>
        </authorList>
    </citation>
    <scope>GENOME REANNOTATION</scope>
    <scope>ALTERNATIVE SPLICING</scope>
    <source>
        <strain>Berkeley</strain>
    </source>
</reference>
<reference key="5">
    <citation type="submission" date="2011-05" db="EMBL/GenBank/DDBJ databases">
        <authorList>
            <person name="Stapleton M."/>
            <person name="Brokstein P."/>
            <person name="Hong L."/>
            <person name="Agbayani A."/>
            <person name="Booth B."/>
            <person name="Carlson J.W."/>
            <person name="Champe M."/>
            <person name="Chavez C."/>
            <person name="Dorsett V."/>
            <person name="Dresnek D."/>
            <person name="Farfan D."/>
            <person name="Frise E."/>
            <person name="George R.A."/>
            <person name="Gonzalez M."/>
            <person name="Guarin H."/>
            <person name="Kronmiller B."/>
            <person name="Li P.W."/>
            <person name="Liao G."/>
            <person name="Miranda A."/>
            <person name="Mungall C.J."/>
            <person name="Nunoo J."/>
            <person name="Pacleb J.M."/>
            <person name="Paragas V."/>
            <person name="Park S."/>
            <person name="Patel S."/>
            <person name="Phouanenavong S."/>
            <person name="Wan K.H."/>
            <person name="Yu C."/>
            <person name="Lewis S.E."/>
            <person name="Rubin G.M."/>
            <person name="Celniker S.E."/>
        </authorList>
    </citation>
    <scope>NUCLEOTIDE SEQUENCE [LARGE SCALE MRNA] (ISOFORMS C; H; K; F AND M)</scope>
    <source>
        <strain>Berkeley</strain>
        <tissue>Embryo</tissue>
        <tissue>Larva</tissue>
        <tissue>Pupae</tissue>
    </source>
</reference>
<reference key="6">
    <citation type="journal article" date="1998" name="Cell">
        <title>Localized requirements for windbeutel and pipe reveal a dorsoventral prepattern within the follicular epithelium of the Drosophila ovary.</title>
        <authorList>
            <person name="Nilson L.A."/>
            <person name="Schuepbach T."/>
        </authorList>
    </citation>
    <scope>FUNCTION</scope>
</reference>
<reference key="7">
    <citation type="journal article" date="2000" name="Development">
        <title>Windbeutel is required for function and correct subcellular localization of the Drosophila patterning protein Pipe.</title>
        <authorList>
            <person name="Sen J."/>
            <person name="Goltz J.S."/>
            <person name="Konsolaki M."/>
            <person name="Schuepbach T."/>
            <person name="Stein D."/>
        </authorList>
    </citation>
    <scope>SUBCELLULAR LOCATION</scope>
</reference>
<reference key="8">
    <citation type="journal article" date="2002" name="Development">
        <title>Mechanisms of Gurken-dependent pipe regulation and the robustness of dorsoventral patterning in Drosophila.</title>
        <authorList>
            <person name="Peri F."/>
            <person name="Technau M."/>
            <person name="Roth S."/>
        </authorList>
    </citation>
    <scope>INDUCTION</scope>
</reference>
<reference key="9">
    <citation type="journal article" date="2003" name="J. Biol. Chem.">
        <title>Crystal structure and functional analysis of Drosophila Wind, a protein-disulfide isomerase-related protein.</title>
        <authorList>
            <person name="Ma Q."/>
            <person name="Guo C."/>
            <person name="Barnewitz K."/>
            <person name="Sheldrick G.M."/>
            <person name="Soeling H.-D."/>
            <person name="Uson I."/>
            <person name="Ferrari D.M."/>
        </authorList>
    </citation>
    <scope>SUBCELLULAR LOCATION</scope>
</reference>
<reference key="10">
    <citation type="journal article" date="2004" name="J. Biol. Chem.">
        <title>Mapping of a substrate binding site in the protein disulfide isomerase-related chaperone wind based on protein function and crystal structure.</title>
        <authorList>
            <person name="Barnewitz K."/>
            <person name="Guo C."/>
            <person name="Sevvana M."/>
            <person name="Ma Q."/>
            <person name="Sheldrick G.M."/>
            <person name="Soeling H.-D."/>
            <person name="Ferrari D.M."/>
        </authorList>
    </citation>
    <scope>INTERACTION WITH WBL</scope>
</reference>
<reference key="11">
    <citation type="journal article" date="2006" name="FEBS Lett.">
        <title>Spatially dependent activation of the patterning protease, Easter.</title>
        <authorList>
            <person name="LeMosy E.K."/>
        </authorList>
    </citation>
    <scope>FUNCTION</scope>
</reference>
<reference key="12">
    <citation type="journal article" date="2007" name="J. Biol. Chem.">
        <title>Mutational study of heparan sulfate 2-O-sulfotransferase and chondroitin sulfate 2-O-sulfotransferase.</title>
        <authorList>
            <person name="Xu D."/>
            <person name="Song D."/>
            <person name="Pedersen L.C."/>
            <person name="Liu J."/>
        </authorList>
    </citation>
    <scope>FUNCTION</scope>
    <scope>LACK OF CATALYTIC ACTIVITY (ISOFORMS A AND F)</scope>
</reference>
<reference key="13">
    <citation type="journal article" date="2009" name="Curr. Biol.">
        <title>Sulfation of eggshell components by Pipe defines dorsal-ventral polarity in the Drosophila embryo.</title>
        <authorList>
            <person name="Zhang Z."/>
            <person name="Stevens L.M."/>
            <person name="Stein D."/>
        </authorList>
    </citation>
    <scope>FUNCTION</scope>
</reference>
<reference key="14">
    <citation type="journal article" date="2010" name="Curr. Biol.">
        <title>Pipe-dependent ventral processing of Easter by Snake is the defining step in Drosophila embryo DV axis formation.</title>
        <authorList>
            <person name="Cho Y.S."/>
            <person name="Stevens L.M."/>
            <person name="Stein D."/>
        </authorList>
    </citation>
    <scope>FUNCTION</scope>
</reference>
<gene>
    <name evidence="24" type="primary">pip</name>
    <name evidence="24" type="ORF">CG9614</name>
</gene>
<feature type="chain" id="PRO_0000207683" description="Uronyl 2-sulfotransferase homolog pip">
    <location>
        <begin position="1"/>
        <end position="514"/>
    </location>
</feature>
<feature type="topological domain" description="Cytoplasmic" evidence="2">
    <location>
        <begin position="1"/>
        <end position="30"/>
    </location>
</feature>
<feature type="transmembrane region" description="Helical; Signal-anchor for type II membrane protein" evidence="2">
    <location>
        <begin position="31"/>
        <end position="50"/>
    </location>
</feature>
<feature type="topological domain" description="Lumenal" evidence="2">
    <location>
        <begin position="51"/>
        <end position="514"/>
    </location>
</feature>
<feature type="region of interest" description="Disordered" evidence="4">
    <location>
        <begin position="112"/>
        <end position="185"/>
    </location>
</feature>
<feature type="compositionally biased region" description="Basic and acidic residues" evidence="4">
    <location>
        <begin position="112"/>
        <end position="121"/>
    </location>
</feature>
<feature type="compositionally biased region" description="Basic residues" evidence="4">
    <location>
        <begin position="127"/>
        <end position="140"/>
    </location>
</feature>
<feature type="compositionally biased region" description="Basic and acidic residues" evidence="4">
    <location>
        <begin position="155"/>
        <end position="170"/>
    </location>
</feature>
<feature type="compositionally biased region" description="Acidic residues" evidence="4">
    <location>
        <begin position="171"/>
        <end position="185"/>
    </location>
</feature>
<feature type="active site" evidence="1">
    <location>
        <position position="282"/>
    </location>
</feature>
<feature type="glycosylation site" description="N-linked (GlcNAc...) asparagine" evidence="3">
    <location>
        <position position="207"/>
    </location>
</feature>
<feature type="glycosylation site" description="N-linked (GlcNAc...) asparagine" evidence="3">
    <location>
        <position position="287"/>
    </location>
</feature>
<feature type="glycosylation site" description="N-linked (GlcNAc...) asparagine" evidence="3">
    <location>
        <position position="416"/>
    </location>
</feature>
<feature type="glycosylation site" description="N-linked (GlcNAc...) asparagine" evidence="3">
    <location>
        <position position="451"/>
    </location>
</feature>
<feature type="glycosylation site" description="N-linked (GlcNAc...) asparagine" evidence="3">
    <location>
        <position position="467"/>
    </location>
</feature>
<feature type="splice variant" id="VSP_014065" description="In isoform D." evidence="20">
    <original>KVGYNVHDRRSSEEQLRTPTAHGHHHDHHSHHHHMHQQEKIDGHKHKASHDKQLAVPDNKHKEDEVHYEDDEDEVEENDDDLANDVGTTDSEGFNFKADLLNNTKYAEVDFVFFNRVPKVGSQSLMELMARLGKINGFTHARNKGSAHETIVMNKQRQNDLIADLLTRPKPHIYSQHIAYINFTRFHLPKPIYINLIRDPIDRIISWHYYIRAPWYYRDMQAKLGENAIPMPSEEFMNLDLDTCVRNHDPHCTFTQMQIKNPVGDHRRQTLFFCGMNQKLCMPFNSEAAMQKAKRTVETEYAVVGTWEDTNIT</original>
    <variation>ILQLSPDKLNNTPKAEIDVLFFNRVPKTGSMQLIELMRQLGKVHDYDVEKDPQQGGVIPILETAEQSDLIDNIVNLDDGTVFASHVNFLNFTKHEQPRPIYINMVRDPVERVISWYYYIRAPWVFVPGRRRNNREMPNPKWVNTEFDQCVTSGEKVCTYIENSLLEHVGDHRRQTLFFCGHNEFQCTPFNARLPLQLAKMNVEREYSVVGTWEHTNETLAVLEAYVPRYFADASKMYYSGLHADKQNVNPMKPHISQDILDMVRRNFTREIEFYQFCRQRLHKQYLALKLNDLKRVDKSLAMLSEAKEMAINN</variation>
    <location>
        <begin position="106"/>
        <end position="418"/>
    </location>
</feature>
<feature type="splice variant" id="VSP_014067" description="In isoform A." evidence="18">
    <original>KVGYNVHDRRSSEEQLRTPTAHGHHHDHHSHHHHMHQQEKIDGHKHKASHDKQLAVPDNKHKEDEVHYEDDEDEVEENDDDLANDVGTTDSEGFNFKADLLNNTKYAEVDFVFFNRVPKVGSQSLMELMARLGKINGFTHARNKGSAHETIVMNKQRQNDLIADLLTRPKPHIYSQHIAYINFTRFHLPKPIYINLIRDPIDRIISWHYYIRAPWYYRDMQAKLGENAIPMPSEEFMNLDLDTCVRNHDPHCTFTQMQIKNPVGDHRRQTLFFCGMNQKLCMPFNSEAAMQKAKRTVETEYAVVGTWE</original>
    <variation>MSSLNVRDLNNTRKAQMELVFFNRVPKVGSQTFMELLRRLSERNNFQFHRDAVQKVETIRLAEDQQQEMAEVISELPEPSVFIKHVCFTNFTKFNLPRPIYLNVVRDPVERVISWFYYVRAPWYFVERKAAFPDLPLPHPAWLKKDFETCVLNGDQECTYTQGVTVEGIGDHRRQSLFFCGHDYECTPFNTVGALERAKFAVEQQYAVVGVLEDLNTTLSVLEKYVPRFFEGVRDIYATSAEYLTKINKNNFKPPVSEHVKDIVRRNFTNEIEFYQFCRQRLHKQYLAAHLPQRIITDSAHLPGLIGN</variation>
    <location>
        <begin position="106"/>
        <end position="413"/>
    </location>
</feature>
<feature type="splice variant" id="VSP_014069" description="In isoform G." evidence="20">
    <original>KVGYNVHDRRSSEEQLRTPTAHGHHHDHHSHHHHMHQQEKIDGHKHKASHDKQLAVPDNKHKEDEVHYEDDEDEVEENDDDLANDVGTTDSEGFNFKADLLNNTKYAEVDFVFFNRVPKVGSQSLMELMARLGKINGFTHARNKGSAHETIVMNKQRQNDLIADLLTRPKPHIYSQHIAYINFTRFHLPKPIYINLIRDPIDRIISWHYYIRAPWYYRDMQAKLGENAIPMPSEEFMNLDLDTCVRNHDPHCTFTQMQIKNPVGDHRRQTLFFCGMNQKLCMPFNSEAAMQKAKRTVETEYA</original>
    <variation>LQQLSANRLNNTKNAEIEVLFFNRAAKVGSESMLELFMALEKYNDDLTLERRGLHTRTVRQMDKKQRRESAEFVADLEEGTMYIEHINWLDFDEFDLPKPIYINLVRDPVERVISWFFYARSSYKNAIEYRKRPNQKIKPESWYKKNFNDCVRSGDPECQYVPHTVKDSIANFKRQSLFYCGHHDDCLPFNSPTAVQMAKEHVERDYAVVGSWEDTNITLTVLENYIPRFFRGAKLMYEMHNSKITNRNKNKRKPFVEPEVKEMIRKNFTNEYEFYYFCKQRLYKQYLALNLKELEVHGLLN</variation>
    <location>
        <begin position="106"/>
        <end position="407"/>
    </location>
</feature>
<feature type="splice variant" id="VSP_014071" description="In isoform K." evidence="19">
    <original>KVGYNVHDRRSSEEQLRTPTAHGHHHDHHSHHHHMHQQEKIDGHKHKASHDKQLAVPDNKHKEDEVHYEDDEDEVEENDDDLANDVGTTDSEGFNFKADLLNNTKYAEVDFVFFNRVPKVGSQSLMELMARLGKINGFTHARNKGSAHETIVMNKQRQNDLIADLLTRPKPHIYSQHIAYINFTRFHLPKPIYINLIRDPIDRIISWHYYIRAPWYYRDMQAKLGENAIPMPSEEFMNLDLDTCVRNHDPHCTFTQMQIKNPVGDHRRQTLFFCGMNQKLCMPFNSEAAMQKAKRTVETEY</original>
    <variation>LKHLTTAQLNNTPRAQVDTLFFNRITKTGSEKMMELLKILGKRHNFEARRDVEGFYEVVIMHDAFAKNFIRTEVLNCTKANSYTKHVAFLDFDLLDEPWPIYINMVRDPIERLVSWFYYVRAPWHFAERKEMFGDAIVLPSIDWLRKDFNRCIEERDPECVYEQMEMGNLGDHRRQSLYLCGQNMAVCMPFNSHEAMQRAKKNVEEHYAVVGTWEDTNTTLSVLEGYIPRFFSGAKDQYYALRKSLGNYNRNTYRPSLSDKARAVLSQNLTREIELYQFVRHRLYKQYIALKLEEDPKLWD</variation>
    <location>
        <begin position="106"/>
        <end position="406"/>
    </location>
</feature>
<feature type="splice variant" id="VSP_014073" description="In isoform H." evidence="19">
    <original>KVGYNVHDRRSSEEQLRTPTAHGHHHDHHSHHHHMHQQEKIDGHKHKASHDKQLAVPDNKHKEDEVHYEDDEDEVEENDDDLANDVGTTDSEGFNFKADLLNNTKYAEVDFVFFNRVPKVGSQSLMELMARLGKINGFTHARNKGSAHETIVMNKQRQNDLIADLLTRPKPHIYSQHIAYINFTRFHLPKPIYINLIRDPIDRIISWHYYIRAPWYYRDMQAKLGENAIPMPSEEFMNLDLDTCVRNHDPHCTFTQMQIKNPVGDHRRQTLFFCGMNQKLCMPFNSEAAMQKAKRTVETE</original>
    <variation>LGSLTPSQLNNTAKAEMDRLFFTRCAKVGSESLTEFMEHLQKINNFQVDKYGIMKKSKRQLKPRAQAETAGYIYNLDEGSVYIEHVPWIDFNEYNLPKPIFINLVRDPVERMISWYYYVRNSYRNAIFYRNNPLAPLKPTAWFKKSYNDCVRSGDPECQYVPLAVRDVEGNFKRQTLFFCGHDQDCLPFNSPLAVQIAKRRVETEYAVVGTWEETNITLTVLEHYIPRYFARAKMIFNLYQKSLQNRNRNNRKPHVDADVRAMVRRNFTHEYDFYYFCKQRLYMQYIALKRTELERLNFS</variation>
    <location>
        <begin position="106"/>
        <end position="405"/>
    </location>
</feature>
<feature type="splice variant" id="VSP_014075" description="In isoform C." evidence="16 19">
    <original>KVGYNVHDRRSSEEQLRTPTAHGHHHDHHSHHHHMHQQEKIDGHKHKASHDKQLAVPDNKHKEDEVHYEDDEDEVEENDDDLANDVGTTDSEGFNFKADLLNNTKYAEVDFVFFNRVPKVGSQSLMELMARLGKINGFTHARNKGSAHETIVMNKQRQNDLIADLLTRPKPHIYSQHIAYINFTRFHLPKPIYINLIRDPIDRIISWHYYIRAPWYYRDMQAKLGENAIPMPSEEFMNLDLDTCVRNHDPHCTFTQMQIKNPVGDHRRQTLFFCGMNQKLCMPFNSEAAMQKAKRTVE</original>
    <variation>LWRLNPKFLNNTKFHFRDIIFYNRVPKTGSETLIELMIQLGKKNDFQNERSPFSKPTGMYWDVKRQKQEATRILELQEEPAFVYVEHMNYMNIRPFHLPQPIYINMIRDPVERVISWFYYKRTPWNSVKMYKVTGKFQNRTHYTKNFEECVLTHDPECRYDYGLLFKDDSADHKRQSLFFCGHSPICEPFNTPAAIARAKQNVERDFSVVGSWEDTNVTLTVLEHYIPRFFKGTMELYYEPNIGLAFKKANINPWKPKISERIKQIMRANFTQEYEFYYFCKQRLYRQYFAINKQLHF</variation>
    <location>
        <begin position="106"/>
        <end position="403"/>
    </location>
</feature>
<feature type="splice variant" id="VSP_014077" description="In isoform J." evidence="20">
    <original>KVGYNVHDRRSSEEQLRTPTAHGHHHDHHSHHHHMHQQEKIDGHKHKASHDKQLAVPDNKHKEDEVHYEDDEDEVEENDDDLANDVGTTDSEGFNFKADLLNNTKYAEVDFVFFNRVPKVGSQSLMELMARLGKINGFTHARNKGSAHETIVMNKQRQNDLIADLLTRPKPHIYSQHIAYINFTRFHLPKPIYINLIRDPIDRIISWHYYIRAPWYYRDMQAKLGENAIPMPSEEFMNLDLDTCVRNHDPHCTFTQMQIKNPVGDHRRQTLFFCGMNQKLCMPFNSEAAMQKAKRT</original>
    <variation>LGRVNPMHLNNTRFAGSETVIFNRPTRVDSEQMVPLFRQLAAMNDINVVLNGPVRTMNRTRTEKEELTEAEWTIELEKGSIYMAHSNWLDFASFGFKKPIYISLVKDPIDRMITDFYKRRSRVKRAIYRRMYPGRRERPDEWYQLSFNECVRNRSPECLFVQHAVADYIQDFKRQTLYFCGNAADCLPFNSHHATQVAKRRVEKEYSVVGTWEERNITLTVLEKYVPRFFNHARFLYKLHSKSIRNRNRNNRKPHIDADVREMVRRNFTNEYEFYYFCKQRLYKQYLALQLENNLH</variation>
    <location>
        <begin position="106"/>
        <end position="401"/>
    </location>
</feature>
<feature type="splice variant" id="VSP_014079" description="In isoform F." evidence="19">
    <original>KVGYNVHDRRSSEEQLRTPTAHGHHHDHHSHHHHMHQQEKIDGHKHKASHDKQLAVPDNKHKEDEVHYEDDEDEVEENDDDLANDVGTTDSEGFNFKADLLNNTKYAEVDFVFFNRVPKVGSQSLMELMARLGKINGFTHARNKGSAHETIVMNKQRQNDLIADLLTRPKPHIYSQHIAYINFTRFHLPKPIYINLIRDPIDRIISWHYYIRAPWYYRDMQAKLGENAIPMPSEEFMNLDLDTCVRNHDPHCTFTQMQIKNPVGDHRRQTLFFCGMNQKLCMPFNSEAAMQK</original>
    <variation>LENLEPAHLNNTPKAERDFIFYNRLEKTGSQSMTRLIKQLGDRLGFDTYRNIVRPSRSITESEEDEKDLVEQLFELGEHAVYVEHANWVNFTQHDSPRPIYINMVRHPIQKVISAYYYQRHPLIFAQSLLRNPNKPMQTKKFFDTNFNDCVRKRVRPHCVFDAHNPFNGDWRRFSLHLCGNSEICTHFNSETTTQIAKMNVEREYAVVGSWEDTNVTLAVLEAYIPRFFTDATKVYYSNTENFTINNVSHDTHLDKDVEEYLKSSFSFEIELYLFIKQRLYKQYIAVHKNEF</variation>
    <location>
        <begin position="106"/>
        <end position="397"/>
    </location>
</feature>
<feature type="splice variant" id="VSP_014081" description="In isoform I." evidence="20">
    <original>KVGYNVHDRRSSEEQLRTPTAHGHHHDHHSHHHHMHQQEKIDGHKHKASHDKQLAVPDNKHKEDEVHYEDDEDEVEENDDDLANDVGTTDSEGFNFKADLLNNTKYAEVDFVFFNRVPKVGSQSLMELMARLGKINGFTHARNKGSAHETIVMNKQRQNDLIADLLTRPKPHIYSQHIAYINFTRFHLPKPIYINLIRDPIDRIISWHYYIRAPWYYRDMQAKLGENAIPMPSEEFMNLDLDTCVRNHDPHCT</original>
    <variation>LASLSSKKLNNTRHSRLEVIFFNRGAKVGSEALMELTQTMAPYNNMTVVTKGPMDIKSRTRSPKEQMIQAIWVTELEPGTIYIEHCNWLDFRRYQLPRPIYINLVRDPVERMISWYYYVRSGYRNAIHHRRFPNATIKSEKWFKKSYNDCVRSGDPECQYVPGSIKDPEGNYKRQTLFFCGHSRECLPFDSQRAIQLAKLNVERDYAVVGTWEETNITLTVFEAYIPRFFKGVRNIFECRFHYERFKNVSGTT</variation>
    <location>
        <begin position="106"/>
        <end position="358"/>
    </location>
</feature>
<feature type="splice variant" id="VSP_054034" description="In isoform M." evidence="19">
    <original>KVGYNVHDRRSSEEQLRTPTAHGHHHDHHSHHHHMHQQEKIDGHKHKASHDKQLAVPDNKHKEDEVHYEDDEDEVEENDDDLANDVGTTDSEGFNFKADL</original>
    <variation>LGRVNPMHLNNTRFAGSETVIFNRPTRVDSEQMVPLFRQLAAMNDINVVLNGPVRTMNRTRTEKEELTEAEWTIELEKGSIYMAHSNWLDFASFGFKKPIYISLVKDPIDRMITDFYKRRSRVKRAIYRRMYPGRRERPDEWYQLSFNECVRNRSPECLFVQHAVADYIQDFKRQTLYFCGNAADCL</variation>
    <location>
        <begin position="106"/>
        <end position="205"/>
    </location>
</feature>
<feature type="splice variant" id="VSP_054035" description="In isoform N." evidence="20">
    <location>
        <position position="106"/>
    </location>
</feature>
<feature type="splice variant" id="VSP_054036" description="In isoform M." evidence="19">
    <location>
        <begin position="206"/>
        <end position="514"/>
    </location>
</feature>
<feature type="splice variant" id="VSP_014082" description="In isoform I." evidence="20">
    <location>
        <begin position="359"/>
        <end position="514"/>
    </location>
</feature>
<feature type="splice variant" id="VSP_014080" description="In isoform F." evidence="19">
    <location>
        <begin position="398"/>
        <end position="514"/>
    </location>
</feature>
<feature type="splice variant" id="VSP_014078" description="In isoform J." evidence="20">
    <location>
        <begin position="402"/>
        <end position="514"/>
    </location>
</feature>
<feature type="splice variant" id="VSP_014076" description="In isoform C." evidence="16 19">
    <location>
        <begin position="404"/>
        <end position="514"/>
    </location>
</feature>
<feature type="splice variant" id="VSP_014074" description="In isoform H." evidence="19">
    <location>
        <begin position="406"/>
        <end position="514"/>
    </location>
</feature>
<feature type="splice variant" id="VSP_014072" description="In isoform K." evidence="19">
    <location>
        <begin position="407"/>
        <end position="514"/>
    </location>
</feature>
<feature type="splice variant" id="VSP_014070" description="In isoform G." evidence="20">
    <location>
        <begin position="408"/>
        <end position="514"/>
    </location>
</feature>
<feature type="splice variant" id="VSP_014068" description="In isoform A." evidence="18">
    <location>
        <begin position="414"/>
        <end position="514"/>
    </location>
</feature>
<feature type="splice variant" id="VSP_014066" description="In isoform D." evidence="20">
    <location>
        <begin position="419"/>
        <end position="514"/>
    </location>
</feature>
<feature type="sequence conflict" description="In Ref. 2; AAK56855." evidence="20" ref="2">
    <original>L</original>
    <variation>M</variation>
    <location sequence="Q86BJ3-2">
        <position position="401"/>
    </location>
</feature>
<name>UST_DROME</name>